<keyword id="KW-1185">Reference proteome</keyword>
<evidence type="ECO:0000256" key="1">
    <source>
        <dbReference type="SAM" id="MobiDB-lite"/>
    </source>
</evidence>
<feature type="chain" id="PRO_0000049503" description="Uncharacterized protein YdgB">
    <location>
        <begin position="1"/>
        <end position="90"/>
    </location>
</feature>
<feature type="region of interest" description="Disordered" evidence="1">
    <location>
        <begin position="25"/>
        <end position="90"/>
    </location>
</feature>
<feature type="compositionally biased region" description="Polar residues" evidence="1">
    <location>
        <begin position="30"/>
        <end position="54"/>
    </location>
</feature>
<feature type="compositionally biased region" description="Polar residues" evidence="1">
    <location>
        <begin position="65"/>
        <end position="79"/>
    </location>
</feature>
<reference key="1">
    <citation type="submission" date="1997-03" db="EMBL/GenBank/DDBJ databases">
        <title>A 148 kbp sequence of the region between 35 and 47 degree of the Bacillus subtilis genome.</title>
        <authorList>
            <person name="Kasahara Y."/>
            <person name="Nakai S."/>
            <person name="Lee S."/>
            <person name="Sadaie Y."/>
            <person name="Ogasawara N."/>
        </authorList>
    </citation>
    <scope>NUCLEOTIDE SEQUENCE [GENOMIC DNA]</scope>
    <source>
        <strain>168</strain>
    </source>
</reference>
<reference key="2">
    <citation type="journal article" date="1997" name="Nature">
        <title>The complete genome sequence of the Gram-positive bacterium Bacillus subtilis.</title>
        <authorList>
            <person name="Kunst F."/>
            <person name="Ogasawara N."/>
            <person name="Moszer I."/>
            <person name="Albertini A.M."/>
            <person name="Alloni G."/>
            <person name="Azevedo V."/>
            <person name="Bertero M.G."/>
            <person name="Bessieres P."/>
            <person name="Bolotin A."/>
            <person name="Borchert S."/>
            <person name="Borriss R."/>
            <person name="Boursier L."/>
            <person name="Brans A."/>
            <person name="Braun M."/>
            <person name="Brignell S.C."/>
            <person name="Bron S."/>
            <person name="Brouillet S."/>
            <person name="Bruschi C.V."/>
            <person name="Caldwell B."/>
            <person name="Capuano V."/>
            <person name="Carter N.M."/>
            <person name="Choi S.-K."/>
            <person name="Codani J.-J."/>
            <person name="Connerton I.F."/>
            <person name="Cummings N.J."/>
            <person name="Daniel R.A."/>
            <person name="Denizot F."/>
            <person name="Devine K.M."/>
            <person name="Duesterhoeft A."/>
            <person name="Ehrlich S.D."/>
            <person name="Emmerson P.T."/>
            <person name="Entian K.-D."/>
            <person name="Errington J."/>
            <person name="Fabret C."/>
            <person name="Ferrari E."/>
            <person name="Foulger D."/>
            <person name="Fritz C."/>
            <person name="Fujita M."/>
            <person name="Fujita Y."/>
            <person name="Fuma S."/>
            <person name="Galizzi A."/>
            <person name="Galleron N."/>
            <person name="Ghim S.-Y."/>
            <person name="Glaser P."/>
            <person name="Goffeau A."/>
            <person name="Golightly E.J."/>
            <person name="Grandi G."/>
            <person name="Guiseppi G."/>
            <person name="Guy B.J."/>
            <person name="Haga K."/>
            <person name="Haiech J."/>
            <person name="Harwood C.R."/>
            <person name="Henaut A."/>
            <person name="Hilbert H."/>
            <person name="Holsappel S."/>
            <person name="Hosono S."/>
            <person name="Hullo M.-F."/>
            <person name="Itaya M."/>
            <person name="Jones L.-M."/>
            <person name="Joris B."/>
            <person name="Karamata D."/>
            <person name="Kasahara Y."/>
            <person name="Klaerr-Blanchard M."/>
            <person name="Klein C."/>
            <person name="Kobayashi Y."/>
            <person name="Koetter P."/>
            <person name="Koningstein G."/>
            <person name="Krogh S."/>
            <person name="Kumano M."/>
            <person name="Kurita K."/>
            <person name="Lapidus A."/>
            <person name="Lardinois S."/>
            <person name="Lauber J."/>
            <person name="Lazarevic V."/>
            <person name="Lee S.-M."/>
            <person name="Levine A."/>
            <person name="Liu H."/>
            <person name="Masuda S."/>
            <person name="Mauel C."/>
            <person name="Medigue C."/>
            <person name="Medina N."/>
            <person name="Mellado R.P."/>
            <person name="Mizuno M."/>
            <person name="Moestl D."/>
            <person name="Nakai S."/>
            <person name="Noback M."/>
            <person name="Noone D."/>
            <person name="O'Reilly M."/>
            <person name="Ogawa K."/>
            <person name="Ogiwara A."/>
            <person name="Oudega B."/>
            <person name="Park S.-H."/>
            <person name="Parro V."/>
            <person name="Pohl T.M."/>
            <person name="Portetelle D."/>
            <person name="Porwollik S."/>
            <person name="Prescott A.M."/>
            <person name="Presecan E."/>
            <person name="Pujic P."/>
            <person name="Purnelle B."/>
            <person name="Rapoport G."/>
            <person name="Rey M."/>
            <person name="Reynolds S."/>
            <person name="Rieger M."/>
            <person name="Rivolta C."/>
            <person name="Rocha E."/>
            <person name="Roche B."/>
            <person name="Rose M."/>
            <person name="Sadaie Y."/>
            <person name="Sato T."/>
            <person name="Scanlan E."/>
            <person name="Schleich S."/>
            <person name="Schroeter R."/>
            <person name="Scoffone F."/>
            <person name="Sekiguchi J."/>
            <person name="Sekowska A."/>
            <person name="Seror S.J."/>
            <person name="Serror P."/>
            <person name="Shin B.-S."/>
            <person name="Soldo B."/>
            <person name="Sorokin A."/>
            <person name="Tacconi E."/>
            <person name="Takagi T."/>
            <person name="Takahashi H."/>
            <person name="Takemaru K."/>
            <person name="Takeuchi M."/>
            <person name="Tamakoshi A."/>
            <person name="Tanaka T."/>
            <person name="Terpstra P."/>
            <person name="Tognoni A."/>
            <person name="Tosato V."/>
            <person name="Uchiyama S."/>
            <person name="Vandenbol M."/>
            <person name="Vannier F."/>
            <person name="Vassarotti A."/>
            <person name="Viari A."/>
            <person name="Wambutt R."/>
            <person name="Wedler E."/>
            <person name="Wedler H."/>
            <person name="Weitzenegger T."/>
            <person name="Winters P."/>
            <person name="Wipat A."/>
            <person name="Yamamoto H."/>
            <person name="Yamane K."/>
            <person name="Yasumoto K."/>
            <person name="Yata K."/>
            <person name="Yoshida K."/>
            <person name="Yoshikawa H.-F."/>
            <person name="Zumstein E."/>
            <person name="Yoshikawa H."/>
            <person name="Danchin A."/>
        </authorList>
    </citation>
    <scope>NUCLEOTIDE SEQUENCE [LARGE SCALE GENOMIC DNA]</scope>
    <source>
        <strain>168</strain>
    </source>
</reference>
<protein>
    <recommendedName>
        <fullName>Uncharacterized protein YdgB</fullName>
    </recommendedName>
</protein>
<name>YDGB_BACSU</name>
<sequence length="90" mass="9462">MPSTVINLYYLKINSISGNGSITIGEAAYNSPTNNQKSQGTNSSFGDTSPTESVMENFLNDPDVNDQTSIGNSDTSNVNAPPIAPPPILD</sequence>
<gene>
    <name type="primary">ydgB</name>
    <name type="ordered locus">BSU05570</name>
</gene>
<accession>P96700</accession>
<dbReference type="EMBL" id="AB001488">
    <property type="protein sequence ID" value="BAA19390.1"/>
    <property type="molecule type" value="Genomic_DNA"/>
</dbReference>
<dbReference type="EMBL" id="AL009126">
    <property type="protein sequence ID" value="CAB12364.1"/>
    <property type="molecule type" value="Genomic_DNA"/>
</dbReference>
<dbReference type="PIR" id="D69782">
    <property type="entry name" value="D69782"/>
</dbReference>
<dbReference type="RefSeq" id="NP_388438.1">
    <property type="nucleotide sequence ID" value="NC_000964.3"/>
</dbReference>
<dbReference type="RefSeq" id="WP_003243854.1">
    <property type="nucleotide sequence ID" value="NZ_OZ025638.1"/>
</dbReference>
<dbReference type="FunCoup" id="P96700">
    <property type="interactions" value="126"/>
</dbReference>
<dbReference type="STRING" id="224308.BSU05570"/>
<dbReference type="PaxDb" id="224308-BSU05570"/>
<dbReference type="EnsemblBacteria" id="CAB12364">
    <property type="protein sequence ID" value="CAB12364"/>
    <property type="gene ID" value="BSU_05570"/>
</dbReference>
<dbReference type="GeneID" id="938056"/>
<dbReference type="KEGG" id="bsu:BSU05570"/>
<dbReference type="PATRIC" id="fig|224308.179.peg.599"/>
<dbReference type="eggNOG" id="ENOG5033IXY">
    <property type="taxonomic scope" value="Bacteria"/>
</dbReference>
<dbReference type="InParanoid" id="P96700"/>
<dbReference type="OrthoDB" id="2934210at2"/>
<dbReference type="BioCyc" id="BSUB:BSU05570-MONOMER"/>
<dbReference type="Proteomes" id="UP000001570">
    <property type="component" value="Chromosome"/>
</dbReference>
<dbReference type="InterPro" id="IPR019618">
    <property type="entry name" value="Spore_germination_GerPA"/>
</dbReference>
<dbReference type="Pfam" id="PF10676">
    <property type="entry name" value="gerPA"/>
    <property type="match status" value="1"/>
</dbReference>
<proteinExistence type="predicted"/>
<organism>
    <name type="scientific">Bacillus subtilis (strain 168)</name>
    <dbReference type="NCBI Taxonomy" id="224308"/>
    <lineage>
        <taxon>Bacteria</taxon>
        <taxon>Bacillati</taxon>
        <taxon>Bacillota</taxon>
        <taxon>Bacilli</taxon>
        <taxon>Bacillales</taxon>
        <taxon>Bacillaceae</taxon>
        <taxon>Bacillus</taxon>
    </lineage>
</organism>